<evidence type="ECO:0000255" key="1">
    <source>
        <dbReference type="HAMAP-Rule" id="MF_01363"/>
    </source>
</evidence>
<evidence type="ECO:0000305" key="2"/>
<comment type="function">
    <text evidence="1">This protein binds to 23S rRNA in the presence of protein L20.</text>
</comment>
<comment type="subunit">
    <text evidence="1">Part of the 50S ribosomal subunit. Contacts protein L20.</text>
</comment>
<comment type="similarity">
    <text evidence="1">Belongs to the bacterial ribosomal protein bL21 family.</text>
</comment>
<reference key="1">
    <citation type="journal article" date="2008" name="Foodborne Pathog. Dis.">
        <title>The complete genome sequence and analysis of the human pathogen Campylobacter lari.</title>
        <authorList>
            <person name="Miller W.G."/>
            <person name="Wang G."/>
            <person name="Binnewies T.T."/>
            <person name="Parker C.T."/>
        </authorList>
    </citation>
    <scope>NUCLEOTIDE SEQUENCE [LARGE SCALE GENOMIC DNA]</scope>
    <source>
        <strain>RM2100 / D67 / ATCC BAA-1060</strain>
    </source>
</reference>
<keyword id="KW-1185">Reference proteome</keyword>
<keyword id="KW-0687">Ribonucleoprotein</keyword>
<keyword id="KW-0689">Ribosomal protein</keyword>
<keyword id="KW-0694">RNA-binding</keyword>
<keyword id="KW-0699">rRNA-binding</keyword>
<protein>
    <recommendedName>
        <fullName evidence="1">Large ribosomal subunit protein bL21</fullName>
    </recommendedName>
    <alternativeName>
        <fullName evidence="2">50S ribosomal protein L21</fullName>
    </alternativeName>
</protein>
<feature type="chain" id="PRO_1000166709" description="Large ribosomal subunit protein bL21">
    <location>
        <begin position="1"/>
        <end position="102"/>
    </location>
</feature>
<name>RL21_CAMLR</name>
<proteinExistence type="inferred from homology"/>
<dbReference type="EMBL" id="CP000932">
    <property type="protein sequence ID" value="ACM63546.1"/>
    <property type="molecule type" value="Genomic_DNA"/>
</dbReference>
<dbReference type="RefSeq" id="WP_012660931.1">
    <property type="nucleotide sequence ID" value="NC_012039.1"/>
</dbReference>
<dbReference type="SMR" id="B9KER1"/>
<dbReference type="STRING" id="306263.Cla_0183"/>
<dbReference type="GeneID" id="93004272"/>
<dbReference type="KEGG" id="cla:CLA_0183"/>
<dbReference type="eggNOG" id="COG0261">
    <property type="taxonomic scope" value="Bacteria"/>
</dbReference>
<dbReference type="HOGENOM" id="CLU_061463_3_1_7"/>
<dbReference type="Proteomes" id="UP000007727">
    <property type="component" value="Chromosome"/>
</dbReference>
<dbReference type="GO" id="GO:0005737">
    <property type="term" value="C:cytoplasm"/>
    <property type="evidence" value="ECO:0007669"/>
    <property type="project" value="UniProtKB-ARBA"/>
</dbReference>
<dbReference type="GO" id="GO:1990904">
    <property type="term" value="C:ribonucleoprotein complex"/>
    <property type="evidence" value="ECO:0007669"/>
    <property type="project" value="UniProtKB-KW"/>
</dbReference>
<dbReference type="GO" id="GO:0005840">
    <property type="term" value="C:ribosome"/>
    <property type="evidence" value="ECO:0007669"/>
    <property type="project" value="UniProtKB-KW"/>
</dbReference>
<dbReference type="GO" id="GO:0019843">
    <property type="term" value="F:rRNA binding"/>
    <property type="evidence" value="ECO:0007669"/>
    <property type="project" value="UniProtKB-UniRule"/>
</dbReference>
<dbReference type="GO" id="GO:0003735">
    <property type="term" value="F:structural constituent of ribosome"/>
    <property type="evidence" value="ECO:0007669"/>
    <property type="project" value="InterPro"/>
</dbReference>
<dbReference type="GO" id="GO:0006412">
    <property type="term" value="P:translation"/>
    <property type="evidence" value="ECO:0007669"/>
    <property type="project" value="UniProtKB-UniRule"/>
</dbReference>
<dbReference type="HAMAP" id="MF_01363">
    <property type="entry name" value="Ribosomal_bL21"/>
    <property type="match status" value="1"/>
</dbReference>
<dbReference type="InterPro" id="IPR028909">
    <property type="entry name" value="bL21-like"/>
</dbReference>
<dbReference type="InterPro" id="IPR036164">
    <property type="entry name" value="bL21-like_sf"/>
</dbReference>
<dbReference type="InterPro" id="IPR001787">
    <property type="entry name" value="Ribosomal_bL21"/>
</dbReference>
<dbReference type="InterPro" id="IPR018258">
    <property type="entry name" value="Ribosomal_bL21_CS"/>
</dbReference>
<dbReference type="NCBIfam" id="TIGR00061">
    <property type="entry name" value="L21"/>
    <property type="match status" value="1"/>
</dbReference>
<dbReference type="PANTHER" id="PTHR21349">
    <property type="entry name" value="50S RIBOSOMAL PROTEIN L21"/>
    <property type="match status" value="1"/>
</dbReference>
<dbReference type="PANTHER" id="PTHR21349:SF0">
    <property type="entry name" value="LARGE RIBOSOMAL SUBUNIT PROTEIN BL21M"/>
    <property type="match status" value="1"/>
</dbReference>
<dbReference type="Pfam" id="PF00829">
    <property type="entry name" value="Ribosomal_L21p"/>
    <property type="match status" value="1"/>
</dbReference>
<dbReference type="SUPFAM" id="SSF141091">
    <property type="entry name" value="L21p-like"/>
    <property type="match status" value="1"/>
</dbReference>
<dbReference type="PROSITE" id="PS01169">
    <property type="entry name" value="RIBOSOMAL_L21"/>
    <property type="match status" value="1"/>
</dbReference>
<organism>
    <name type="scientific">Campylobacter lari (strain RM2100 / D67 / ATCC BAA-1060)</name>
    <dbReference type="NCBI Taxonomy" id="306263"/>
    <lineage>
        <taxon>Bacteria</taxon>
        <taxon>Pseudomonadati</taxon>
        <taxon>Campylobacterota</taxon>
        <taxon>Epsilonproteobacteria</taxon>
        <taxon>Campylobacterales</taxon>
        <taxon>Campylobacteraceae</taxon>
        <taxon>Campylobacter</taxon>
    </lineage>
</organism>
<accession>B9KER1</accession>
<gene>
    <name evidence="1" type="primary">rplU</name>
    <name type="ordered locus">Cla_0183</name>
</gene>
<sequence length="102" mass="11659">MYAIIKHSGKQYRVSQGDELKLDRFEAEVKSSVEVSEVLAVCDKELKVGAPFVAGAKVVLEVIAHGKDKKVVIYKKRRRKDSKLKRGFRRQFTRVRVVDIKA</sequence>